<proteinExistence type="evidence at protein level"/>
<organism>
    <name type="scientific">Gallus gallus</name>
    <name type="common">Chicken</name>
    <dbReference type="NCBI Taxonomy" id="9031"/>
    <lineage>
        <taxon>Eukaryota</taxon>
        <taxon>Metazoa</taxon>
        <taxon>Chordata</taxon>
        <taxon>Craniata</taxon>
        <taxon>Vertebrata</taxon>
        <taxon>Euteleostomi</taxon>
        <taxon>Archelosauria</taxon>
        <taxon>Archosauria</taxon>
        <taxon>Dinosauria</taxon>
        <taxon>Saurischia</taxon>
        <taxon>Theropoda</taxon>
        <taxon>Coelurosauria</taxon>
        <taxon>Aves</taxon>
        <taxon>Neognathae</taxon>
        <taxon>Galloanserae</taxon>
        <taxon>Galliformes</taxon>
        <taxon>Phasianidae</taxon>
        <taxon>Phasianinae</taxon>
        <taxon>Gallus</taxon>
    </lineage>
</organism>
<reference key="1">
    <citation type="journal article" date="1996" name="J. Neurosci.">
        <title>CEPU-1, a novel immunoglobulin superfamily molecule, is expressed by developing cerebellar Purkinje cells.</title>
        <authorList>
            <person name="Spaltmann F."/>
            <person name="Bruemmendorf T."/>
        </authorList>
    </citation>
    <scope>NUCLEOTIDE SEQUENCE [MRNA] (ISOFORMS 1 AND 2)</scope>
    <source>
        <tissue>Brain</tissue>
    </source>
</reference>
<reference key="2">
    <citation type="journal article" date="1999" name="J. Cell Biol.">
        <title>Neurotractin, a novel neurite outgrowth-promoting Ig-like protein that interacts with CEPU-1 and LAMP.</title>
        <authorList>
            <person name="Marg A."/>
            <person name="Sirim P."/>
            <person name="Spaltmann F."/>
            <person name="Plagge A."/>
            <person name="Kauselmann G."/>
            <person name="Buck F."/>
            <person name="Rathjen F.G."/>
            <person name="Bruemmendorf T."/>
        </authorList>
    </citation>
    <scope>INTERACTION WITH NEGR1</scope>
</reference>
<feature type="signal peptide" evidence="1">
    <location>
        <begin position="1"/>
        <end position="28"/>
    </location>
</feature>
<feature type="chain" id="PRO_0000015061" description="Protein CEPU-1">
    <location>
        <begin position="29"/>
        <end position="330"/>
    </location>
</feature>
<feature type="propeptide" id="PRO_0000015062" description="Removed in mature form" evidence="1">
    <location>
        <begin position="331"/>
        <end position="353"/>
    </location>
</feature>
<feature type="domain" description="Ig-like C2-type 1">
    <location>
        <begin position="37"/>
        <end position="124"/>
    </location>
</feature>
<feature type="domain" description="Ig-like C2-type 2">
    <location>
        <begin position="134"/>
        <end position="216"/>
    </location>
</feature>
<feature type="domain" description="Ig-like C2-type 3">
    <location>
        <begin position="220"/>
        <end position="314"/>
    </location>
</feature>
<feature type="lipid moiety-binding region" description="GPI-anchor amidated serine" evidence="1">
    <location>
        <position position="330"/>
    </location>
</feature>
<feature type="glycosylation site" description="N-linked (GlcNAc...) asparagine" evidence="1">
    <location>
        <position position="42"/>
    </location>
</feature>
<feature type="glycosylation site" description="N-linked (GlcNAc...) asparagine" evidence="1">
    <location>
        <position position="68"/>
    </location>
</feature>
<feature type="glycosylation site" description="N-linked (GlcNAc...) asparagine" evidence="1">
    <location>
        <position position="150"/>
    </location>
</feature>
<feature type="glycosylation site" description="N-linked (GlcNAc...) asparagine" evidence="1">
    <location>
        <position position="282"/>
    </location>
</feature>
<feature type="glycosylation site" description="N-linked (GlcNAc...) asparagine" evidence="1">
    <location>
        <position position="290"/>
    </location>
</feature>
<feature type="glycosylation site" description="N-linked (GlcNAc...) asparagine" evidence="1">
    <location>
        <position position="303"/>
    </location>
</feature>
<feature type="disulfide bond" evidence="2">
    <location>
        <begin position="55"/>
        <end position="113"/>
    </location>
</feature>
<feature type="disulfide bond" evidence="2">
    <location>
        <begin position="155"/>
        <end position="199"/>
    </location>
</feature>
<feature type="disulfide bond" evidence="2">
    <location>
        <begin position="241"/>
        <end position="293"/>
    </location>
</feature>
<feature type="splice variant" id="VSP_002607" description="In isoform 2." evidence="4">
    <location>
        <begin position="310"/>
        <end position="320"/>
    </location>
</feature>
<name>CEPU1_CHICK</name>
<comment type="function">
    <text>It may be a cellular address molecule specific to Purkinje cells. It may represent a receptor or a subunit of a receptor complex.</text>
</comment>
<comment type="subunit">
    <text evidence="3">Interacts with NEGR1.</text>
</comment>
<comment type="subcellular location">
    <subcellularLocation>
        <location>Cell membrane</location>
        <topology>Lipid-anchor</topology>
        <topology>GPI-anchor</topology>
    </subcellularLocation>
</comment>
<comment type="alternative products">
    <event type="alternative splicing"/>
    <isoform>
        <id>Q90773-1</id>
        <name>1</name>
        <name>Minor</name>
        <sequence type="displayed"/>
    </isoform>
    <isoform>
        <id>Q90773-2</id>
        <name>2</name>
        <name>Major</name>
        <sequence type="described" ref="VSP_002607"/>
    </isoform>
</comment>
<comment type="tissue specificity">
    <text>Found on the dendrites, somata and axons of developing Purkinje cells. Undetectable on other neurons like Golgi or granule cells.</text>
</comment>
<comment type="developmental stage">
    <text>Expressed by developing cerebellar Purkinje cells. Expression coincides with the growth of the dendritic tree, after Purkinje cells have finished their migration from the ventricular zone (from 15 dpc until 21 dpc). Expressed in the adult.</text>
</comment>
<comment type="similarity">
    <text evidence="5">Belongs to the immunoglobulin superfamily. IgLON family.</text>
</comment>
<protein>
    <recommendedName>
        <fullName>Protein CEPU-1</fullName>
    </recommendedName>
</protein>
<keyword id="KW-0025">Alternative splicing</keyword>
<keyword id="KW-0130">Cell adhesion</keyword>
<keyword id="KW-1003">Cell membrane</keyword>
<keyword id="KW-1015">Disulfide bond</keyword>
<keyword id="KW-0325">Glycoprotein</keyword>
<keyword id="KW-0336">GPI-anchor</keyword>
<keyword id="KW-0393">Immunoglobulin domain</keyword>
<keyword id="KW-0449">Lipoprotein</keyword>
<keyword id="KW-0472">Membrane</keyword>
<keyword id="KW-1185">Reference proteome</keyword>
<keyword id="KW-0677">Repeat</keyword>
<keyword id="KW-0732">Signal</keyword>
<evidence type="ECO:0000255" key="1"/>
<evidence type="ECO:0000255" key="2">
    <source>
        <dbReference type="PROSITE-ProRule" id="PRU00114"/>
    </source>
</evidence>
<evidence type="ECO:0000269" key="3">
    <source>
    </source>
</evidence>
<evidence type="ECO:0000303" key="4">
    <source>
    </source>
</evidence>
<evidence type="ECO:0000305" key="5"/>
<sequence>MAQAKMQHPVSWVIFAGMAALLLFQGVPVRSGDATFPKAMDNVTVRQGESATLRCSVDNRVTRVAWLNRSSILYAGNDKWCLDPRVVLLANTKTQYSIQIHDVDVYDEGPYTCSVQTDNHPKTSRVHLIVQVSPKITETSSDISINEGGNVSLTCIATGRPDPTITWRHISPKAVGFISEDEYLEITGITREQSGEYECSASNDVAAPVVQRVKVTVNYPPYISDAKSTGVPVGQKGILMCEASAVPSADFQWYKDDKRLAEGQKGLKVENKAFFSRLTFFNVSEQDYGNYTCVASNQLGNTNASMILYEETTTALTPWKGPGAVHDGNSGAWRRGSCAWLLALPLAQLARQF</sequence>
<accession>Q90773</accession>
<dbReference type="EMBL" id="Z72497">
    <property type="protein sequence ID" value="CAA96578.1"/>
    <property type="molecule type" value="mRNA"/>
</dbReference>
<dbReference type="RefSeq" id="NP_990042.1">
    <property type="nucleotide sequence ID" value="NM_204711.1"/>
</dbReference>
<dbReference type="SMR" id="Q90773"/>
<dbReference type="FunCoup" id="Q90773">
    <property type="interactions" value="108"/>
</dbReference>
<dbReference type="STRING" id="9031.ENSGALP00000002185"/>
<dbReference type="GlyGen" id="Q90773">
    <property type="glycosylation" value="6 sites"/>
</dbReference>
<dbReference type="PaxDb" id="9031-ENSGALP00000002185"/>
<dbReference type="GeneID" id="395450"/>
<dbReference type="KEGG" id="gga:395450"/>
<dbReference type="CTD" id="50863"/>
<dbReference type="VEuPathDB" id="HostDB:geneid_395450"/>
<dbReference type="eggNOG" id="KOG3510">
    <property type="taxonomic scope" value="Eukaryota"/>
</dbReference>
<dbReference type="InParanoid" id="Q90773"/>
<dbReference type="OrthoDB" id="6159398at2759"/>
<dbReference type="PhylomeDB" id="Q90773"/>
<dbReference type="PRO" id="PR:Q90773"/>
<dbReference type="Proteomes" id="UP000000539">
    <property type="component" value="Unassembled WGS sequence"/>
</dbReference>
<dbReference type="GO" id="GO:0005886">
    <property type="term" value="C:plasma membrane"/>
    <property type="evidence" value="ECO:0007669"/>
    <property type="project" value="UniProtKB-SubCell"/>
</dbReference>
<dbReference type="GO" id="GO:0098552">
    <property type="term" value="C:side of membrane"/>
    <property type="evidence" value="ECO:0007669"/>
    <property type="project" value="UniProtKB-KW"/>
</dbReference>
<dbReference type="GO" id="GO:0007155">
    <property type="term" value="P:cell adhesion"/>
    <property type="evidence" value="ECO:0007669"/>
    <property type="project" value="UniProtKB-KW"/>
</dbReference>
<dbReference type="FunFam" id="2.60.40.10:FF:000013">
    <property type="entry name" value="cell adhesion molecule 1 isoform X1"/>
    <property type="match status" value="1"/>
</dbReference>
<dbReference type="FunFam" id="2.60.40.10:FF:000305">
    <property type="entry name" value="neurotrimin isoform X2"/>
    <property type="match status" value="1"/>
</dbReference>
<dbReference type="FunFam" id="2.60.40.10:FF:000113">
    <property type="entry name" value="Opioid-binding protein/cell adhesion molecule"/>
    <property type="match status" value="1"/>
</dbReference>
<dbReference type="Gene3D" id="2.60.40.10">
    <property type="entry name" value="Immunoglobulins"/>
    <property type="match status" value="3"/>
</dbReference>
<dbReference type="InterPro" id="IPR007110">
    <property type="entry name" value="Ig-like_dom"/>
</dbReference>
<dbReference type="InterPro" id="IPR036179">
    <property type="entry name" value="Ig-like_dom_sf"/>
</dbReference>
<dbReference type="InterPro" id="IPR013783">
    <property type="entry name" value="Ig-like_fold"/>
</dbReference>
<dbReference type="InterPro" id="IPR013098">
    <property type="entry name" value="Ig_I-set"/>
</dbReference>
<dbReference type="InterPro" id="IPR003599">
    <property type="entry name" value="Ig_sub"/>
</dbReference>
<dbReference type="InterPro" id="IPR003598">
    <property type="entry name" value="Ig_sub2"/>
</dbReference>
<dbReference type="InterPro" id="IPR050876">
    <property type="entry name" value="IgLON_domain"/>
</dbReference>
<dbReference type="InterPro" id="IPR013151">
    <property type="entry name" value="Immunoglobulin_dom"/>
</dbReference>
<dbReference type="PANTHER" id="PTHR42757">
    <property type="entry name" value="IGLON FAMILY OF IMMUNOGLOBULIN SUPERFAMILY-RELATED"/>
    <property type="match status" value="1"/>
</dbReference>
<dbReference type="PANTHER" id="PTHR42757:SF9">
    <property type="entry name" value="NEUROTRIMIN"/>
    <property type="match status" value="1"/>
</dbReference>
<dbReference type="Pfam" id="PF07679">
    <property type="entry name" value="I-set"/>
    <property type="match status" value="1"/>
</dbReference>
<dbReference type="Pfam" id="PF00047">
    <property type="entry name" value="ig"/>
    <property type="match status" value="1"/>
</dbReference>
<dbReference type="Pfam" id="PF13927">
    <property type="entry name" value="Ig_3"/>
    <property type="match status" value="1"/>
</dbReference>
<dbReference type="SMART" id="SM00409">
    <property type="entry name" value="IG"/>
    <property type="match status" value="3"/>
</dbReference>
<dbReference type="SMART" id="SM00408">
    <property type="entry name" value="IGc2"/>
    <property type="match status" value="3"/>
</dbReference>
<dbReference type="SUPFAM" id="SSF48726">
    <property type="entry name" value="Immunoglobulin"/>
    <property type="match status" value="3"/>
</dbReference>
<dbReference type="PROSITE" id="PS50835">
    <property type="entry name" value="IG_LIKE"/>
    <property type="match status" value="3"/>
</dbReference>